<reference key="1">
    <citation type="journal article" date="1995" name="Mol. Endocrinol.">
        <title>Trout and chicken proglucagon: alternative splicing generates mRNA transcripts encoding glucagon-like peptide 2.</title>
        <authorList>
            <person name="Irwin D.M."/>
            <person name="Wong J."/>
        </authorList>
    </citation>
    <scope>NUCLEOTIDE SEQUENCE [GENOMIC DNA / MRNA]</scope>
    <scope>ALTERNATIVE SPLICING</scope>
    <source>
        <tissue>Distal small intestine</tissue>
        <tissue>Pancreas</tissue>
    </source>
</reference>
<evidence type="ECO:0000250" key="1"/>
<evidence type="ECO:0000255" key="2"/>
<evidence type="ECO:0000305" key="3"/>
<sequence>MFGIHSLAGVLLLVIVQRQLASPLQEAEDNSSLETTDPLLEDLMGVSNVKRHSEGTFSNDYSKYQEERMAQDFVQWLMNSKRSGAPSKRHADGTYTSDVSTYLQDQAAKDFVSWLKSGRARRESAEESRNGPMSRRHVDGSFTSDVNKVLDSLAAKEYLLWVMTSKTSGKSNKRQEDH</sequence>
<name>GLUC1_ONCMY</name>
<comment type="function">
    <text evidence="1">Promotes hydrolysis of glycogen and lipids, and raises the blood sugar level.</text>
</comment>
<comment type="subcellular location">
    <subcellularLocation>
        <location>Secreted</location>
    </subcellularLocation>
</comment>
<comment type="alternative products">
    <event type="alternative splicing"/>
    <isoform>
        <id>Q91971-1</id>
        <name>Intestinal</name>
        <sequence type="displayed"/>
    </isoform>
    <isoform>
        <id>Q91971-2</id>
        <name>Pancreatic</name>
        <sequence type="described" ref="VSP_050470"/>
    </isoform>
</comment>
<comment type="induction">
    <text>Produced in the A cells of the islets of Langerhans in response to a drop in blood sugar concentration.</text>
</comment>
<comment type="similarity">
    <text evidence="3">Belongs to the glucagon family.</text>
</comment>
<gene>
    <name type="primary">gcg1</name>
</gene>
<protein>
    <recommendedName>
        <fullName>Glucagon-1</fullName>
    </recommendedName>
    <alternativeName>
        <fullName>Glucagon I</fullName>
    </alternativeName>
    <component>
        <recommendedName>
            <fullName>Glicentin-related polypeptide 1</fullName>
            <shortName>GRPP 1</shortName>
        </recommendedName>
    </component>
    <component>
        <recommendedName>
            <fullName>Glucagon-1</fullName>
        </recommendedName>
    </component>
    <component>
        <recommendedName>
            <fullName>Glucagon-like peptide 1-1</fullName>
            <shortName>GLP 1-1</shortName>
        </recommendedName>
    </component>
    <component>
        <recommendedName>
            <fullName>Glucagon-like peptide 2</fullName>
            <shortName>GLP 2</shortName>
        </recommendedName>
    </component>
</protein>
<organism>
    <name type="scientific">Oncorhynchus mykiss</name>
    <name type="common">Rainbow trout</name>
    <name type="synonym">Salmo gairdneri</name>
    <dbReference type="NCBI Taxonomy" id="8022"/>
    <lineage>
        <taxon>Eukaryota</taxon>
        <taxon>Metazoa</taxon>
        <taxon>Chordata</taxon>
        <taxon>Craniata</taxon>
        <taxon>Vertebrata</taxon>
        <taxon>Euteleostomi</taxon>
        <taxon>Actinopterygii</taxon>
        <taxon>Neopterygii</taxon>
        <taxon>Teleostei</taxon>
        <taxon>Protacanthopterygii</taxon>
        <taxon>Salmoniformes</taxon>
        <taxon>Salmonidae</taxon>
        <taxon>Salmoninae</taxon>
        <taxon>Oncorhynchus</taxon>
    </lineage>
</organism>
<accession>Q91971</accession>
<accession>Q91188</accession>
<accession>Q91408</accession>
<accession>Q92169</accession>
<feature type="signal peptide" evidence="2">
    <location>
        <begin position="1"/>
        <end position="21"/>
    </location>
</feature>
<feature type="peptide" id="PRO_0000011357" description="Glicentin-related polypeptide 1">
    <location>
        <begin position="22"/>
        <end position="49"/>
    </location>
</feature>
<feature type="peptide" id="PRO_0000011358" description="Glucagon-1">
    <location>
        <begin position="52"/>
        <end position="80"/>
    </location>
</feature>
<feature type="propeptide" id="PRO_0000011359" evidence="1">
    <location>
        <begin position="83"/>
        <end position="87"/>
    </location>
</feature>
<feature type="peptide" id="PRO_0000011360" description="Glucagon-like peptide 1-1" evidence="1">
    <location>
        <begin position="90"/>
        <end position="120"/>
    </location>
</feature>
<feature type="propeptide" id="PRO_0000011361">
    <location>
        <begin position="123"/>
        <end position="134"/>
    </location>
</feature>
<feature type="peptide" id="PRO_0000011362" description="Glucagon-like peptide 2">
    <location>
        <begin position="137"/>
        <end position="169"/>
    </location>
</feature>
<feature type="propeptide" id="PRO_0000011363">
    <location>
        <begin position="171"/>
        <end position="178"/>
    </location>
</feature>
<feature type="splice variant" id="VSP_050470" description="In isoform Pancreatic." evidence="3">
    <location>
        <begin position="124"/>
        <end position="178"/>
    </location>
</feature>
<keyword id="KW-0025">Alternative splicing</keyword>
<keyword id="KW-0165">Cleavage on pair of basic residues</keyword>
<keyword id="KW-0372">Hormone</keyword>
<keyword id="KW-0964">Secreted</keyword>
<keyword id="KW-0732">Signal</keyword>
<proteinExistence type="evidence at transcript level"/>
<dbReference type="EMBL" id="U19913">
    <property type="protein sequence ID" value="AAC59667.1"/>
    <property type="molecule type" value="mRNA"/>
</dbReference>
<dbReference type="EMBL" id="U19917">
    <property type="protein sequence ID" value="AAC59669.1"/>
    <property type="molecule type" value="mRNA"/>
</dbReference>
<dbReference type="EMBL" id="U19918">
    <property type="protein sequence ID" value="AAC60212.1"/>
    <property type="molecule type" value="Genomic_DNA"/>
</dbReference>
<dbReference type="EMBL" id="U19919">
    <property type="protein sequence ID" value="AAC60213.1"/>
    <property type="molecule type" value="Genomic_DNA"/>
</dbReference>
<dbReference type="EMBL" id="U19918">
    <property type="protein sequence ID" value="AAC60213.1"/>
    <property type="status" value="JOINED"/>
    <property type="molecule type" value="Genomic_DNA"/>
</dbReference>
<dbReference type="EMBL" id="S78475">
    <property type="protein sequence ID" value="AAB34505.1"/>
    <property type="molecule type" value="mRNA"/>
</dbReference>
<dbReference type="EMBL" id="S78473">
    <property type="protein sequence ID" value="AAB34504.2"/>
    <property type="molecule type" value="mRNA"/>
</dbReference>
<dbReference type="PIR" id="I51058">
    <property type="entry name" value="I51058"/>
</dbReference>
<dbReference type="RefSeq" id="NP_001118170.1">
    <molecule id="Q91971-1"/>
    <property type="nucleotide sequence ID" value="NM_001124698.1"/>
</dbReference>
<dbReference type="SMR" id="Q91971"/>
<dbReference type="GeneID" id="100136745"/>
<dbReference type="KEGG" id="omy:100136745"/>
<dbReference type="CTD" id="100136745"/>
<dbReference type="OrthoDB" id="9904258at2759"/>
<dbReference type="Proteomes" id="UP000694395">
    <property type="component" value="Unplaced"/>
</dbReference>
<dbReference type="GO" id="GO:0005576">
    <property type="term" value="C:extracellular region"/>
    <property type="evidence" value="ECO:0007669"/>
    <property type="project" value="UniProtKB-SubCell"/>
</dbReference>
<dbReference type="GO" id="GO:0031769">
    <property type="term" value="F:glucagon receptor binding"/>
    <property type="evidence" value="ECO:0007669"/>
    <property type="project" value="TreeGrafter"/>
</dbReference>
<dbReference type="GO" id="GO:0005179">
    <property type="term" value="F:hormone activity"/>
    <property type="evidence" value="ECO:0007669"/>
    <property type="project" value="UniProtKB-KW"/>
</dbReference>
<dbReference type="GO" id="GO:0042594">
    <property type="term" value="P:response to starvation"/>
    <property type="evidence" value="ECO:0007669"/>
    <property type="project" value="TreeGrafter"/>
</dbReference>
<dbReference type="Gene3D" id="6.10.250.590">
    <property type="match status" value="3"/>
</dbReference>
<dbReference type="InterPro" id="IPR015550">
    <property type="entry name" value="Glucagon"/>
</dbReference>
<dbReference type="InterPro" id="IPR000532">
    <property type="entry name" value="Glucagon_GIP_secretin_VIP"/>
</dbReference>
<dbReference type="InterPro" id="IPR006162">
    <property type="entry name" value="Ppantetheine_attach_site"/>
</dbReference>
<dbReference type="PANTHER" id="PTHR11418">
    <property type="entry name" value="GLUCAGON"/>
    <property type="match status" value="1"/>
</dbReference>
<dbReference type="PANTHER" id="PTHR11418:SF0">
    <property type="entry name" value="PRO-GLUCAGON"/>
    <property type="match status" value="1"/>
</dbReference>
<dbReference type="Pfam" id="PF00123">
    <property type="entry name" value="Hormone_2"/>
    <property type="match status" value="3"/>
</dbReference>
<dbReference type="SMART" id="SM00070">
    <property type="entry name" value="GLUCA"/>
    <property type="match status" value="3"/>
</dbReference>
<dbReference type="PROSITE" id="PS00260">
    <property type="entry name" value="GLUCAGON"/>
    <property type="match status" value="3"/>
</dbReference>